<comment type="function">
    <text evidence="1">Catalyzes the condensation of iminoaspartate with dihydroxyacetone phosphate to form quinolinate.</text>
</comment>
<comment type="catalytic activity">
    <reaction evidence="1">
        <text>iminosuccinate + dihydroxyacetone phosphate = quinolinate + phosphate + 2 H2O + H(+)</text>
        <dbReference type="Rhea" id="RHEA:25888"/>
        <dbReference type="ChEBI" id="CHEBI:15377"/>
        <dbReference type="ChEBI" id="CHEBI:15378"/>
        <dbReference type="ChEBI" id="CHEBI:29959"/>
        <dbReference type="ChEBI" id="CHEBI:43474"/>
        <dbReference type="ChEBI" id="CHEBI:57642"/>
        <dbReference type="ChEBI" id="CHEBI:77875"/>
        <dbReference type="EC" id="2.5.1.72"/>
    </reaction>
    <physiologicalReaction direction="left-to-right" evidence="1">
        <dbReference type="Rhea" id="RHEA:25889"/>
    </physiologicalReaction>
</comment>
<comment type="cofactor">
    <cofactor evidence="1">
        <name>[4Fe-4S] cluster</name>
        <dbReference type="ChEBI" id="CHEBI:49883"/>
    </cofactor>
    <text evidence="1">Binds 1 [4Fe-4S] cluster per subunit.</text>
</comment>
<comment type="pathway">
    <text evidence="1">Cofactor biosynthesis; NAD(+) biosynthesis; quinolinate from iminoaspartate: step 1/1.</text>
</comment>
<comment type="subcellular location">
    <subcellularLocation>
        <location evidence="1">Cytoplasm</location>
    </subcellularLocation>
</comment>
<comment type="similarity">
    <text evidence="1">Belongs to the quinolinate synthase family. Type 1 subfamily.</text>
</comment>
<evidence type="ECO:0000255" key="1">
    <source>
        <dbReference type="HAMAP-Rule" id="MF_00567"/>
    </source>
</evidence>
<protein>
    <recommendedName>
        <fullName evidence="1">Quinolinate synthase</fullName>
        <ecNumber evidence="1">2.5.1.72</ecNumber>
    </recommendedName>
</protein>
<dbReference type="EC" id="2.5.1.72" evidence="1"/>
<dbReference type="EMBL" id="BX936398">
    <property type="protein sequence ID" value="CAH20402.1"/>
    <property type="molecule type" value="Genomic_DNA"/>
</dbReference>
<dbReference type="RefSeq" id="WP_002210741.1">
    <property type="nucleotide sequence ID" value="NZ_CP009712.1"/>
</dbReference>
<dbReference type="SMR" id="Q66D87"/>
<dbReference type="GeneID" id="57977266"/>
<dbReference type="KEGG" id="ypo:BZ17_1368"/>
<dbReference type="KEGG" id="yps:YPTB1162"/>
<dbReference type="PATRIC" id="fig|273123.14.peg.1460"/>
<dbReference type="UniPathway" id="UPA00253">
    <property type="reaction ID" value="UER00327"/>
</dbReference>
<dbReference type="Proteomes" id="UP000001011">
    <property type="component" value="Chromosome"/>
</dbReference>
<dbReference type="GO" id="GO:0005829">
    <property type="term" value="C:cytosol"/>
    <property type="evidence" value="ECO:0007669"/>
    <property type="project" value="TreeGrafter"/>
</dbReference>
<dbReference type="GO" id="GO:0051539">
    <property type="term" value="F:4 iron, 4 sulfur cluster binding"/>
    <property type="evidence" value="ECO:0007669"/>
    <property type="project" value="UniProtKB-KW"/>
</dbReference>
<dbReference type="GO" id="GO:0046872">
    <property type="term" value="F:metal ion binding"/>
    <property type="evidence" value="ECO:0007669"/>
    <property type="project" value="UniProtKB-KW"/>
</dbReference>
<dbReference type="GO" id="GO:0008987">
    <property type="term" value="F:quinolinate synthetase A activity"/>
    <property type="evidence" value="ECO:0007669"/>
    <property type="project" value="UniProtKB-UniRule"/>
</dbReference>
<dbReference type="GO" id="GO:0034628">
    <property type="term" value="P:'de novo' NAD biosynthetic process from L-aspartate"/>
    <property type="evidence" value="ECO:0007669"/>
    <property type="project" value="TreeGrafter"/>
</dbReference>
<dbReference type="FunFam" id="3.40.50.10800:FF:000003">
    <property type="entry name" value="Quinolinate synthase A"/>
    <property type="match status" value="1"/>
</dbReference>
<dbReference type="Gene3D" id="3.40.50.10800">
    <property type="entry name" value="NadA-like"/>
    <property type="match status" value="3"/>
</dbReference>
<dbReference type="HAMAP" id="MF_00567">
    <property type="entry name" value="NadA_type1"/>
    <property type="match status" value="1"/>
</dbReference>
<dbReference type="InterPro" id="IPR003473">
    <property type="entry name" value="NadA"/>
</dbReference>
<dbReference type="InterPro" id="IPR036094">
    <property type="entry name" value="NadA_sf"/>
</dbReference>
<dbReference type="InterPro" id="IPR023513">
    <property type="entry name" value="Quinolinate_synth_A_type1"/>
</dbReference>
<dbReference type="NCBIfam" id="TIGR00550">
    <property type="entry name" value="nadA"/>
    <property type="match status" value="1"/>
</dbReference>
<dbReference type="NCBIfam" id="NF006877">
    <property type="entry name" value="PRK09375.1-1"/>
    <property type="match status" value="1"/>
</dbReference>
<dbReference type="NCBIfam" id="NF006878">
    <property type="entry name" value="PRK09375.1-2"/>
    <property type="match status" value="1"/>
</dbReference>
<dbReference type="PANTHER" id="PTHR30573:SF0">
    <property type="entry name" value="QUINOLINATE SYNTHASE, CHLOROPLASTIC"/>
    <property type="match status" value="1"/>
</dbReference>
<dbReference type="PANTHER" id="PTHR30573">
    <property type="entry name" value="QUINOLINATE SYNTHETASE A"/>
    <property type="match status" value="1"/>
</dbReference>
<dbReference type="Pfam" id="PF02445">
    <property type="entry name" value="NadA"/>
    <property type="match status" value="1"/>
</dbReference>
<dbReference type="SUPFAM" id="SSF142754">
    <property type="entry name" value="NadA-like"/>
    <property type="match status" value="1"/>
</dbReference>
<sequence>MSEIFDVNAAIYPFPARPVPLDTNEKAFYREKIKTLLKQRDAVLVAHYYTDPEIQALAEETGGCVADSLEMARFGNNHPASTLLVAGVRFMGETAKILNPEKKVLMPTLNAECSLDLGCPVDEFTAFCDSHPDRTVVVYANTSAAVKAKADWVVTSSIAVELIEHLDSLGEKIIWAPDRHLGSYVQKKSGADVLCWQGACIVHDEFKTQALARMKALYPDAAVLVHPESPQAVVDMADAVGSTSQLIQAAKTLPQKTLIVATDRGIFYKMQQACPDKELFEAPTAGEGATCRSCAHCPWMAMNGLRAIAEGLEQGGVMHEIHVDEELRQQALIPLNRMLDFANQLKLQVKGNA</sequence>
<proteinExistence type="inferred from homology"/>
<reference key="1">
    <citation type="journal article" date="2004" name="Proc. Natl. Acad. Sci. U.S.A.">
        <title>Insights into the evolution of Yersinia pestis through whole-genome comparison with Yersinia pseudotuberculosis.</title>
        <authorList>
            <person name="Chain P.S.G."/>
            <person name="Carniel E."/>
            <person name="Larimer F.W."/>
            <person name="Lamerdin J."/>
            <person name="Stoutland P.O."/>
            <person name="Regala W.M."/>
            <person name="Georgescu A.M."/>
            <person name="Vergez L.M."/>
            <person name="Land M.L."/>
            <person name="Motin V.L."/>
            <person name="Brubaker R.R."/>
            <person name="Fowler J."/>
            <person name="Hinnebusch J."/>
            <person name="Marceau M."/>
            <person name="Medigue C."/>
            <person name="Simonet M."/>
            <person name="Chenal-Francisque V."/>
            <person name="Souza B."/>
            <person name="Dacheux D."/>
            <person name="Elliott J.M."/>
            <person name="Derbise A."/>
            <person name="Hauser L.J."/>
            <person name="Garcia E."/>
        </authorList>
    </citation>
    <scope>NUCLEOTIDE SEQUENCE [LARGE SCALE GENOMIC DNA]</scope>
    <source>
        <strain>IP32953</strain>
    </source>
</reference>
<name>NADA_YERPS</name>
<accession>Q66D87</accession>
<feature type="chain" id="PRO_1000024981" description="Quinolinate synthase">
    <location>
        <begin position="1"/>
        <end position="353"/>
    </location>
</feature>
<feature type="binding site" evidence="1">
    <location>
        <position position="47"/>
    </location>
    <ligand>
        <name>iminosuccinate</name>
        <dbReference type="ChEBI" id="CHEBI:77875"/>
    </ligand>
</feature>
<feature type="binding site" evidence="1">
    <location>
        <position position="68"/>
    </location>
    <ligand>
        <name>iminosuccinate</name>
        <dbReference type="ChEBI" id="CHEBI:77875"/>
    </ligand>
</feature>
<feature type="binding site" evidence="1">
    <location>
        <position position="113"/>
    </location>
    <ligand>
        <name>[4Fe-4S] cluster</name>
        <dbReference type="ChEBI" id="CHEBI:49883"/>
    </ligand>
</feature>
<feature type="binding site" evidence="1">
    <location>
        <begin position="139"/>
        <end position="141"/>
    </location>
    <ligand>
        <name>iminosuccinate</name>
        <dbReference type="ChEBI" id="CHEBI:77875"/>
    </ligand>
</feature>
<feature type="binding site" evidence="1">
    <location>
        <position position="156"/>
    </location>
    <ligand>
        <name>iminosuccinate</name>
        <dbReference type="ChEBI" id="CHEBI:77875"/>
    </ligand>
</feature>
<feature type="binding site" evidence="1">
    <location>
        <position position="200"/>
    </location>
    <ligand>
        <name>[4Fe-4S] cluster</name>
        <dbReference type="ChEBI" id="CHEBI:49883"/>
    </ligand>
</feature>
<feature type="binding site" evidence="1">
    <location>
        <begin position="226"/>
        <end position="228"/>
    </location>
    <ligand>
        <name>iminosuccinate</name>
        <dbReference type="ChEBI" id="CHEBI:77875"/>
    </ligand>
</feature>
<feature type="binding site" evidence="1">
    <location>
        <position position="243"/>
    </location>
    <ligand>
        <name>iminosuccinate</name>
        <dbReference type="ChEBI" id="CHEBI:77875"/>
    </ligand>
</feature>
<feature type="binding site" evidence="1">
    <location>
        <position position="297"/>
    </location>
    <ligand>
        <name>[4Fe-4S] cluster</name>
        <dbReference type="ChEBI" id="CHEBI:49883"/>
    </ligand>
</feature>
<gene>
    <name evidence="1" type="primary">nadA</name>
    <name type="ordered locus">YPTB1162</name>
</gene>
<organism>
    <name type="scientific">Yersinia pseudotuberculosis serotype I (strain IP32953)</name>
    <dbReference type="NCBI Taxonomy" id="273123"/>
    <lineage>
        <taxon>Bacteria</taxon>
        <taxon>Pseudomonadati</taxon>
        <taxon>Pseudomonadota</taxon>
        <taxon>Gammaproteobacteria</taxon>
        <taxon>Enterobacterales</taxon>
        <taxon>Yersiniaceae</taxon>
        <taxon>Yersinia</taxon>
    </lineage>
</organism>
<keyword id="KW-0004">4Fe-4S</keyword>
<keyword id="KW-0963">Cytoplasm</keyword>
<keyword id="KW-0408">Iron</keyword>
<keyword id="KW-0411">Iron-sulfur</keyword>
<keyword id="KW-0479">Metal-binding</keyword>
<keyword id="KW-0662">Pyridine nucleotide biosynthesis</keyword>
<keyword id="KW-0808">Transferase</keyword>